<organism>
    <name type="scientific">Drosophila melanogaster</name>
    <name type="common">Fruit fly</name>
    <dbReference type="NCBI Taxonomy" id="7227"/>
    <lineage>
        <taxon>Eukaryota</taxon>
        <taxon>Metazoa</taxon>
        <taxon>Ecdysozoa</taxon>
        <taxon>Arthropoda</taxon>
        <taxon>Hexapoda</taxon>
        <taxon>Insecta</taxon>
        <taxon>Pterygota</taxon>
        <taxon>Neoptera</taxon>
        <taxon>Endopterygota</taxon>
        <taxon>Diptera</taxon>
        <taxon>Brachycera</taxon>
        <taxon>Muscomorpha</taxon>
        <taxon>Ephydroidea</taxon>
        <taxon>Drosophilidae</taxon>
        <taxon>Drosophila</taxon>
        <taxon>Sophophora</taxon>
    </lineage>
</organism>
<proteinExistence type="evidence at protein level"/>
<keyword id="KW-0217">Developmental protein</keyword>
<keyword id="KW-0238">DNA-binding</keyword>
<keyword id="KW-0371">Homeobox</keyword>
<keyword id="KW-0539">Nucleus</keyword>
<keyword id="KW-0597">Phosphoprotein</keyword>
<keyword id="KW-1185">Reference proteome</keyword>
<keyword id="KW-0716">Sensory transduction</keyword>
<keyword id="KW-0844">Vision</keyword>
<keyword id="KW-0879">Wnt signaling pathway</keyword>
<feature type="chain" id="PRO_0000048833" description="Homeobox protein B-H2">
    <location>
        <begin position="1"/>
        <end position="645"/>
    </location>
</feature>
<feature type="DNA-binding region" description="Homeobox" evidence="1">
    <location>
        <begin position="380"/>
        <end position="439"/>
    </location>
</feature>
<feature type="region of interest" description="Disordered" evidence="2">
    <location>
        <begin position="1"/>
        <end position="50"/>
    </location>
</feature>
<feature type="region of interest" description="Disordered" evidence="2">
    <location>
        <begin position="86"/>
        <end position="134"/>
    </location>
</feature>
<feature type="region of interest" description="Disordered" evidence="2">
    <location>
        <begin position="149"/>
        <end position="176"/>
    </location>
</feature>
<feature type="region of interest" description="Disordered" evidence="2">
    <location>
        <begin position="240"/>
        <end position="259"/>
    </location>
</feature>
<feature type="region of interest" description="Disordered" evidence="2">
    <location>
        <begin position="265"/>
        <end position="385"/>
    </location>
</feature>
<feature type="region of interest" description="Disordered" evidence="2">
    <location>
        <begin position="553"/>
        <end position="645"/>
    </location>
</feature>
<feature type="compositionally biased region" description="Low complexity" evidence="2">
    <location>
        <begin position="18"/>
        <end position="29"/>
    </location>
</feature>
<feature type="compositionally biased region" description="Basic residues" evidence="2">
    <location>
        <begin position="106"/>
        <end position="121"/>
    </location>
</feature>
<feature type="compositionally biased region" description="Low complexity" evidence="2">
    <location>
        <begin position="122"/>
        <end position="134"/>
    </location>
</feature>
<feature type="compositionally biased region" description="Basic and acidic residues" evidence="2">
    <location>
        <begin position="149"/>
        <end position="165"/>
    </location>
</feature>
<feature type="compositionally biased region" description="Basic residues" evidence="2">
    <location>
        <begin position="244"/>
        <end position="253"/>
    </location>
</feature>
<feature type="compositionally biased region" description="Low complexity" evidence="2">
    <location>
        <begin position="275"/>
        <end position="316"/>
    </location>
</feature>
<feature type="compositionally biased region" description="Gly residues" evidence="2">
    <location>
        <begin position="317"/>
        <end position="328"/>
    </location>
</feature>
<feature type="compositionally biased region" description="Polar residues" evidence="2">
    <location>
        <begin position="329"/>
        <end position="339"/>
    </location>
</feature>
<feature type="compositionally biased region" description="Low complexity" evidence="2">
    <location>
        <begin position="362"/>
        <end position="377"/>
    </location>
</feature>
<feature type="compositionally biased region" description="Low complexity" evidence="2">
    <location>
        <begin position="553"/>
        <end position="574"/>
    </location>
</feature>
<feature type="compositionally biased region" description="Polar residues" evidence="2">
    <location>
        <begin position="583"/>
        <end position="592"/>
    </location>
</feature>
<feature type="compositionally biased region" description="Pro residues" evidence="2">
    <location>
        <begin position="594"/>
        <end position="603"/>
    </location>
</feature>
<feature type="compositionally biased region" description="Basic and acidic residues" evidence="2">
    <location>
        <begin position="618"/>
        <end position="632"/>
    </location>
</feature>
<feature type="compositionally biased region" description="Acidic residues" evidence="2">
    <location>
        <begin position="633"/>
        <end position="645"/>
    </location>
</feature>
<feature type="modified residue" description="Phosphothreonine" evidence="8">
    <location>
        <position position="593"/>
    </location>
</feature>
<feature type="modified residue" description="Phosphoserine" evidence="8">
    <location>
        <position position="595"/>
    </location>
</feature>
<feature type="modified residue" description="Phosphoserine" evidence="8">
    <location>
        <position position="602"/>
    </location>
</feature>
<feature type="sequence conflict" description="In Ref. 1; AAB59218." evidence="9" ref="1">
    <location>
        <begin position="121"/>
        <end position="123"/>
    </location>
</feature>
<feature type="sequence conflict" description="In Ref. 1; AAB59218." evidence="9" ref="1">
    <original>T</original>
    <variation>P</variation>
    <location>
        <position position="229"/>
    </location>
</feature>
<feature type="sequence conflict" description="In Ref. 1; AAB59218." evidence="9" ref="1">
    <location>
        <begin position="288"/>
        <end position="289"/>
    </location>
</feature>
<feature type="sequence conflict" description="In Ref. 1; AAB59218." evidence="9" ref="1">
    <original>S</original>
    <variation>N</variation>
    <location>
        <position position="375"/>
    </location>
</feature>
<gene>
    <name type="primary">B-H2</name>
    <name type="synonym">BarH2</name>
    <name type="ORF">CG5488</name>
</gene>
<comment type="function">
    <text evidence="3 4 6 7">B-H1 and B-H2 are regulated by members of the wg signaling pathway; wg and dpp. B-H1 and B-H2 are coexpressed and functionally required in R1 and R6 receptor cells and primary pigment cells for normal eye development. Coexpression is also required for the fate determination of external sensory organs, formation of notal microchaetae, formation of presutural macrochaetae, antennal development and for distal leg morphogenesis; segmentation and specification of tarsal segments 3-5.</text>
</comment>
<comment type="subcellular location">
    <subcellularLocation>
        <location evidence="9">Nucleus</location>
    </subcellularLocation>
</comment>
<comment type="tissue specificity">
    <text evidence="3 4 6 7">B-H1 and B-H2 are abundant in the eye-antenna imaginal disk. Expressed in R1 and R6 cells throughout larval stage until 30 hours after puparium formation, at which time expression is seen in the anterior and posterior primary pigment cells. Coexpressed in embryonic glial cells, neurons of the CNS and PNS, most latitudinal anterior cells of the developing notum and the central circular region of the leg and antennal imaginal disk throughout larval development.</text>
</comment>
<comment type="developmental stage">
    <text evidence="6">Coexpressed at high levels with B-H1 in embryo and pupae and at low levels in larvae.</text>
</comment>
<comment type="similarity">
    <text evidence="9">Belongs to the Antp homeobox family.</text>
</comment>
<accession>Q24256</accession>
<accession>Q24257</accession>
<accession>Q4V712</accession>
<accession>Q9VX55</accession>
<dbReference type="EMBL" id="M82884">
    <property type="protein sequence ID" value="AAA28383.2"/>
    <property type="molecule type" value="mRNA"/>
</dbReference>
<dbReference type="EMBL" id="M82887">
    <property type="protein sequence ID" value="AAB59218.1"/>
    <property type="molecule type" value="Genomic_DNA"/>
</dbReference>
<dbReference type="EMBL" id="M82885">
    <property type="protein sequence ID" value="AAB59218.1"/>
    <property type="status" value="JOINED"/>
    <property type="molecule type" value="Genomic_DNA"/>
</dbReference>
<dbReference type="EMBL" id="M82886">
    <property type="protein sequence ID" value="AAB59218.1"/>
    <property type="status" value="JOINED"/>
    <property type="molecule type" value="Genomic_DNA"/>
</dbReference>
<dbReference type="EMBL" id="AE014298">
    <property type="protein sequence ID" value="AAF48725.1"/>
    <property type="molecule type" value="Genomic_DNA"/>
</dbReference>
<dbReference type="EMBL" id="BT022144">
    <property type="protein sequence ID" value="AAY51539.1"/>
    <property type="molecule type" value="mRNA"/>
</dbReference>
<dbReference type="PIR" id="A41726">
    <property type="entry name" value="A41726"/>
</dbReference>
<dbReference type="PIR" id="S27806">
    <property type="entry name" value="S27806"/>
</dbReference>
<dbReference type="RefSeq" id="NP_523386.1">
    <property type="nucleotide sequence ID" value="NM_078662.3"/>
</dbReference>
<dbReference type="SMR" id="Q24256"/>
<dbReference type="BioGRID" id="59051">
    <property type="interactions" value="20"/>
</dbReference>
<dbReference type="FunCoup" id="Q24256">
    <property type="interactions" value="45"/>
</dbReference>
<dbReference type="IntAct" id="Q24256">
    <property type="interactions" value="18"/>
</dbReference>
<dbReference type="STRING" id="7227.FBpp0074203"/>
<dbReference type="GlyGen" id="Q24256">
    <property type="glycosylation" value="1 site"/>
</dbReference>
<dbReference type="iPTMnet" id="Q24256"/>
<dbReference type="PaxDb" id="7227-FBpp0074203"/>
<dbReference type="EnsemblMetazoa" id="FBtr0074429">
    <property type="protein sequence ID" value="FBpp0074203"/>
    <property type="gene ID" value="FBgn0004854"/>
</dbReference>
<dbReference type="GeneID" id="32723"/>
<dbReference type="KEGG" id="dme:Dmel_CG5488"/>
<dbReference type="UCSC" id="CG5488-RA">
    <property type="organism name" value="d. melanogaster"/>
</dbReference>
<dbReference type="AGR" id="FB:FBgn0004854"/>
<dbReference type="CTD" id="32723"/>
<dbReference type="FlyBase" id="FBgn0004854">
    <property type="gene designation" value="B-H2"/>
</dbReference>
<dbReference type="VEuPathDB" id="VectorBase:FBgn0004854"/>
<dbReference type="eggNOG" id="KOG0488">
    <property type="taxonomic scope" value="Eukaryota"/>
</dbReference>
<dbReference type="GeneTree" id="ENSGT00940000169370"/>
<dbReference type="HOGENOM" id="CLU_393440_0_0_1"/>
<dbReference type="InParanoid" id="Q24256"/>
<dbReference type="OMA" id="EREQYHH"/>
<dbReference type="OrthoDB" id="6159439at2759"/>
<dbReference type="PhylomeDB" id="Q24256"/>
<dbReference type="BioGRID-ORCS" id="32723">
    <property type="hits" value="0 hits in 3 CRISPR screens"/>
</dbReference>
<dbReference type="ChiTaRS" id="B-H2">
    <property type="organism name" value="fly"/>
</dbReference>
<dbReference type="GenomeRNAi" id="32723"/>
<dbReference type="PRO" id="PR:Q24256"/>
<dbReference type="Proteomes" id="UP000000803">
    <property type="component" value="Chromosome X"/>
</dbReference>
<dbReference type="Bgee" id="FBgn0004854">
    <property type="expression patterns" value="Expressed in tormogen cell in proboscis and 57 other cell types or tissues"/>
</dbReference>
<dbReference type="ExpressionAtlas" id="Q24256">
    <property type="expression patterns" value="baseline and differential"/>
</dbReference>
<dbReference type="GO" id="GO:0005634">
    <property type="term" value="C:nucleus"/>
    <property type="evidence" value="ECO:0000318"/>
    <property type="project" value="GO_Central"/>
</dbReference>
<dbReference type="GO" id="GO:0000981">
    <property type="term" value="F:DNA-binding transcription factor activity, RNA polymerase II-specific"/>
    <property type="evidence" value="ECO:0000315"/>
    <property type="project" value="FlyBase"/>
</dbReference>
<dbReference type="GO" id="GO:0000977">
    <property type="term" value="F:RNA polymerase II transcription regulatory region sequence-specific DNA binding"/>
    <property type="evidence" value="ECO:0000318"/>
    <property type="project" value="GO_Central"/>
</dbReference>
<dbReference type="GO" id="GO:0008407">
    <property type="term" value="P:chaeta morphogenesis"/>
    <property type="evidence" value="ECO:0000315"/>
    <property type="project" value="UniProtKB"/>
</dbReference>
<dbReference type="GO" id="GO:0001751">
    <property type="term" value="P:compound eye photoreceptor cell differentiation"/>
    <property type="evidence" value="ECO:0000315"/>
    <property type="project" value="FlyBase"/>
</dbReference>
<dbReference type="GO" id="GO:0008057">
    <property type="term" value="P:eye pigment granule organization"/>
    <property type="evidence" value="ECO:0000315"/>
    <property type="project" value="UniProtKB"/>
</dbReference>
<dbReference type="GO" id="GO:0007455">
    <property type="term" value="P:eye-antennal disc morphogenesis"/>
    <property type="evidence" value="ECO:0000315"/>
    <property type="project" value="UniProtKB"/>
</dbReference>
<dbReference type="GO" id="GO:0007479">
    <property type="term" value="P:leg disc proximal/distal pattern formation"/>
    <property type="evidence" value="ECO:0000315"/>
    <property type="project" value="UniProtKB"/>
</dbReference>
<dbReference type="GO" id="GO:0000122">
    <property type="term" value="P:negative regulation of transcription by RNA polymerase II"/>
    <property type="evidence" value="ECO:0000315"/>
    <property type="project" value="FlyBase"/>
</dbReference>
<dbReference type="GO" id="GO:0006357">
    <property type="term" value="P:regulation of transcription by RNA polymerase II"/>
    <property type="evidence" value="ECO:0000318"/>
    <property type="project" value="GO_Central"/>
</dbReference>
<dbReference type="GO" id="GO:0008052">
    <property type="term" value="P:sensory organ boundary specification"/>
    <property type="evidence" value="ECO:0000315"/>
    <property type="project" value="UniProtKB"/>
</dbReference>
<dbReference type="GO" id="GO:0007601">
    <property type="term" value="P:visual perception"/>
    <property type="evidence" value="ECO:0007669"/>
    <property type="project" value="UniProtKB-KW"/>
</dbReference>
<dbReference type="GO" id="GO:0016055">
    <property type="term" value="P:Wnt signaling pathway"/>
    <property type="evidence" value="ECO:0007669"/>
    <property type="project" value="UniProtKB-KW"/>
</dbReference>
<dbReference type="CDD" id="cd00086">
    <property type="entry name" value="homeodomain"/>
    <property type="match status" value="1"/>
</dbReference>
<dbReference type="FunFam" id="1.10.10.60:FF:000399">
    <property type="entry name" value="Homeobox protein B-H1"/>
    <property type="match status" value="1"/>
</dbReference>
<dbReference type="Gene3D" id="1.10.10.60">
    <property type="entry name" value="Homeodomain-like"/>
    <property type="match status" value="1"/>
</dbReference>
<dbReference type="InterPro" id="IPR001356">
    <property type="entry name" value="HD"/>
</dbReference>
<dbReference type="InterPro" id="IPR017970">
    <property type="entry name" value="Homeobox_CS"/>
</dbReference>
<dbReference type="InterPro" id="IPR009057">
    <property type="entry name" value="Homeodomain-like_sf"/>
</dbReference>
<dbReference type="InterPro" id="IPR052145">
    <property type="entry name" value="Mediator/Homeobox_domain"/>
</dbReference>
<dbReference type="PANTHER" id="PTHR24330:SF10">
    <property type="entry name" value="HOMEOBOX PROTEIN B-H1-RELATED"/>
    <property type="match status" value="1"/>
</dbReference>
<dbReference type="PANTHER" id="PTHR24330">
    <property type="entry name" value="HOMEOBOX PROTEIN BARH-LIKE"/>
    <property type="match status" value="1"/>
</dbReference>
<dbReference type="Pfam" id="PF00046">
    <property type="entry name" value="Homeodomain"/>
    <property type="match status" value="1"/>
</dbReference>
<dbReference type="SMART" id="SM00389">
    <property type="entry name" value="HOX"/>
    <property type="match status" value="1"/>
</dbReference>
<dbReference type="SUPFAM" id="SSF46689">
    <property type="entry name" value="Homeodomain-like"/>
    <property type="match status" value="1"/>
</dbReference>
<dbReference type="PROSITE" id="PS00027">
    <property type="entry name" value="HOMEOBOX_1"/>
    <property type="match status" value="1"/>
</dbReference>
<dbReference type="PROSITE" id="PS50071">
    <property type="entry name" value="HOMEOBOX_2"/>
    <property type="match status" value="1"/>
</dbReference>
<reference evidence="9" key="1">
    <citation type="journal article" date="1992" name="Genes Dev.">
        <title>Dual Bar homeo box genes of Drosophila required in two photoreceptor cells, R1 and R6, and primary pigment cells for normal eye development.</title>
        <authorList>
            <person name="Higashijima S."/>
            <person name="Kojima T."/>
            <person name="Michiue T."/>
            <person name="Ishimaru S."/>
            <person name="Emori Y."/>
            <person name="Saigo K."/>
        </authorList>
    </citation>
    <scope>NUCLEOTIDE SEQUENCE [GENOMIC DNA / MRNA]</scope>
    <scope>FUNCTION</scope>
    <scope>TISSUE SPECIFICITY</scope>
    <scope>DEVELOPMENTAL STAGE</scope>
    <source>
        <strain evidence="6">Canton-S</strain>
        <tissue>Pupae</tissue>
    </source>
</reference>
<reference evidence="9" key="2">
    <citation type="journal article" date="2000" name="Science">
        <title>The genome sequence of Drosophila melanogaster.</title>
        <authorList>
            <person name="Adams M.D."/>
            <person name="Celniker S.E."/>
            <person name="Holt R.A."/>
            <person name="Evans C.A."/>
            <person name="Gocayne J.D."/>
            <person name="Amanatides P.G."/>
            <person name="Scherer S.E."/>
            <person name="Li P.W."/>
            <person name="Hoskins R.A."/>
            <person name="Galle R.F."/>
            <person name="George R.A."/>
            <person name="Lewis S.E."/>
            <person name="Richards S."/>
            <person name="Ashburner M."/>
            <person name="Henderson S.N."/>
            <person name="Sutton G.G."/>
            <person name="Wortman J.R."/>
            <person name="Yandell M.D."/>
            <person name="Zhang Q."/>
            <person name="Chen L.X."/>
            <person name="Brandon R.C."/>
            <person name="Rogers Y.-H.C."/>
            <person name="Blazej R.G."/>
            <person name="Champe M."/>
            <person name="Pfeiffer B.D."/>
            <person name="Wan K.H."/>
            <person name="Doyle C."/>
            <person name="Baxter E.G."/>
            <person name="Helt G."/>
            <person name="Nelson C.R."/>
            <person name="Miklos G.L.G."/>
            <person name="Abril J.F."/>
            <person name="Agbayani A."/>
            <person name="An H.-J."/>
            <person name="Andrews-Pfannkoch C."/>
            <person name="Baldwin D."/>
            <person name="Ballew R.M."/>
            <person name="Basu A."/>
            <person name="Baxendale J."/>
            <person name="Bayraktaroglu L."/>
            <person name="Beasley E.M."/>
            <person name="Beeson K.Y."/>
            <person name="Benos P.V."/>
            <person name="Berman B.P."/>
            <person name="Bhandari D."/>
            <person name="Bolshakov S."/>
            <person name="Borkova D."/>
            <person name="Botchan M.R."/>
            <person name="Bouck J."/>
            <person name="Brokstein P."/>
            <person name="Brottier P."/>
            <person name="Burtis K.C."/>
            <person name="Busam D.A."/>
            <person name="Butler H."/>
            <person name="Cadieu E."/>
            <person name="Center A."/>
            <person name="Chandra I."/>
            <person name="Cherry J.M."/>
            <person name="Cawley S."/>
            <person name="Dahlke C."/>
            <person name="Davenport L.B."/>
            <person name="Davies P."/>
            <person name="de Pablos B."/>
            <person name="Delcher A."/>
            <person name="Deng Z."/>
            <person name="Mays A.D."/>
            <person name="Dew I."/>
            <person name="Dietz S.M."/>
            <person name="Dodson K."/>
            <person name="Doup L.E."/>
            <person name="Downes M."/>
            <person name="Dugan-Rocha S."/>
            <person name="Dunkov B.C."/>
            <person name="Dunn P."/>
            <person name="Durbin K.J."/>
            <person name="Evangelista C.C."/>
            <person name="Ferraz C."/>
            <person name="Ferriera S."/>
            <person name="Fleischmann W."/>
            <person name="Fosler C."/>
            <person name="Gabrielian A.E."/>
            <person name="Garg N.S."/>
            <person name="Gelbart W.M."/>
            <person name="Glasser K."/>
            <person name="Glodek A."/>
            <person name="Gong F."/>
            <person name="Gorrell J.H."/>
            <person name="Gu Z."/>
            <person name="Guan P."/>
            <person name="Harris M."/>
            <person name="Harris N.L."/>
            <person name="Harvey D.A."/>
            <person name="Heiman T.J."/>
            <person name="Hernandez J.R."/>
            <person name="Houck J."/>
            <person name="Hostin D."/>
            <person name="Houston K.A."/>
            <person name="Howland T.J."/>
            <person name="Wei M.-H."/>
            <person name="Ibegwam C."/>
            <person name="Jalali M."/>
            <person name="Kalush F."/>
            <person name="Karpen G.H."/>
            <person name="Ke Z."/>
            <person name="Kennison J.A."/>
            <person name="Ketchum K.A."/>
            <person name="Kimmel B.E."/>
            <person name="Kodira C.D."/>
            <person name="Kraft C.L."/>
            <person name="Kravitz S."/>
            <person name="Kulp D."/>
            <person name="Lai Z."/>
            <person name="Lasko P."/>
            <person name="Lei Y."/>
            <person name="Levitsky A.A."/>
            <person name="Li J.H."/>
            <person name="Li Z."/>
            <person name="Liang Y."/>
            <person name="Lin X."/>
            <person name="Liu X."/>
            <person name="Mattei B."/>
            <person name="McIntosh T.C."/>
            <person name="McLeod M.P."/>
            <person name="McPherson D."/>
            <person name="Merkulov G."/>
            <person name="Milshina N.V."/>
            <person name="Mobarry C."/>
            <person name="Morris J."/>
            <person name="Moshrefi A."/>
            <person name="Mount S.M."/>
            <person name="Moy M."/>
            <person name="Murphy B."/>
            <person name="Murphy L."/>
            <person name="Muzny D.M."/>
            <person name="Nelson D.L."/>
            <person name="Nelson D.R."/>
            <person name="Nelson K.A."/>
            <person name="Nixon K."/>
            <person name="Nusskern D.R."/>
            <person name="Pacleb J.M."/>
            <person name="Palazzolo M."/>
            <person name="Pittman G.S."/>
            <person name="Pan S."/>
            <person name="Pollard J."/>
            <person name="Puri V."/>
            <person name="Reese M.G."/>
            <person name="Reinert K."/>
            <person name="Remington K."/>
            <person name="Saunders R.D.C."/>
            <person name="Scheeler F."/>
            <person name="Shen H."/>
            <person name="Shue B.C."/>
            <person name="Siden-Kiamos I."/>
            <person name="Simpson M."/>
            <person name="Skupski M.P."/>
            <person name="Smith T.J."/>
            <person name="Spier E."/>
            <person name="Spradling A.C."/>
            <person name="Stapleton M."/>
            <person name="Strong R."/>
            <person name="Sun E."/>
            <person name="Svirskas R."/>
            <person name="Tector C."/>
            <person name="Turner R."/>
            <person name="Venter E."/>
            <person name="Wang A.H."/>
            <person name="Wang X."/>
            <person name="Wang Z.-Y."/>
            <person name="Wassarman D.A."/>
            <person name="Weinstock G.M."/>
            <person name="Weissenbach J."/>
            <person name="Williams S.M."/>
            <person name="Woodage T."/>
            <person name="Worley K.C."/>
            <person name="Wu D."/>
            <person name="Yang S."/>
            <person name="Yao Q.A."/>
            <person name="Ye J."/>
            <person name="Yeh R.-F."/>
            <person name="Zaveri J.S."/>
            <person name="Zhan M."/>
            <person name="Zhang G."/>
            <person name="Zhao Q."/>
            <person name="Zheng L."/>
            <person name="Zheng X.H."/>
            <person name="Zhong F.N."/>
            <person name="Zhong W."/>
            <person name="Zhou X."/>
            <person name="Zhu S.C."/>
            <person name="Zhu X."/>
            <person name="Smith H.O."/>
            <person name="Gibbs R.A."/>
            <person name="Myers E.W."/>
            <person name="Rubin G.M."/>
            <person name="Venter J.C."/>
        </authorList>
    </citation>
    <scope>NUCLEOTIDE SEQUENCE [LARGE SCALE GENOMIC DNA]</scope>
    <source>
        <strain evidence="5">Berkeley</strain>
    </source>
</reference>
<reference key="3">
    <citation type="journal article" date="2002" name="Genome Biol.">
        <title>Annotation of the Drosophila melanogaster euchromatic genome: a systematic review.</title>
        <authorList>
            <person name="Misra S."/>
            <person name="Crosby M.A."/>
            <person name="Mungall C.J."/>
            <person name="Matthews B.B."/>
            <person name="Campbell K.S."/>
            <person name="Hradecky P."/>
            <person name="Huang Y."/>
            <person name="Kaminker J.S."/>
            <person name="Millburn G.H."/>
            <person name="Prochnik S.E."/>
            <person name="Smith C.D."/>
            <person name="Tupy J.L."/>
            <person name="Whitfield E.J."/>
            <person name="Bayraktaroglu L."/>
            <person name="Berman B.P."/>
            <person name="Bettencourt B.R."/>
            <person name="Celniker S.E."/>
            <person name="de Grey A.D.N.J."/>
            <person name="Drysdale R.A."/>
            <person name="Harris N.L."/>
            <person name="Richter J."/>
            <person name="Russo S."/>
            <person name="Schroeder A.J."/>
            <person name="Shu S.Q."/>
            <person name="Stapleton M."/>
            <person name="Yamada C."/>
            <person name="Ashburner M."/>
            <person name="Gelbart W.M."/>
            <person name="Rubin G.M."/>
            <person name="Lewis S.E."/>
        </authorList>
    </citation>
    <scope>GENOME REANNOTATION</scope>
    <source>
        <strain>Berkeley</strain>
    </source>
</reference>
<reference key="4">
    <citation type="submission" date="2005-05" db="EMBL/GenBank/DDBJ databases">
        <authorList>
            <person name="Stapleton M."/>
            <person name="Carlson J.W."/>
            <person name="Chavez C."/>
            <person name="Frise E."/>
            <person name="George R.A."/>
            <person name="Pacleb J.M."/>
            <person name="Park S."/>
            <person name="Wan K.H."/>
            <person name="Yu C."/>
            <person name="Celniker S.E."/>
        </authorList>
    </citation>
    <scope>NUCLEOTIDE SEQUENCE [LARGE SCALE MRNA]</scope>
    <source>
        <strain>Berkeley</strain>
    </source>
</reference>
<reference evidence="9" key="5">
    <citation type="journal article" date="1992" name="Genes Dev.">
        <title>Subtype determination of Drosophila embryonic external sensory organs by redundant homeo box genes BarH1 and BarH2.</title>
        <authorList>
            <person name="Higashijima S."/>
            <person name="Michiue T."/>
            <person name="Emori Y."/>
            <person name="Saigo K."/>
        </authorList>
    </citation>
    <scope>FUNCTION</scope>
    <scope>TISSUE SPECIFICITY</scope>
</reference>
<reference evidence="9" key="6">
    <citation type="journal article" date="1999" name="Development">
        <title>Bar homeobox genes are latitudinal prepattern genes in the developing Drosophila notum whose expression is regulated by the concerted functions of decapentaplegic and wingless.</title>
        <authorList>
            <person name="Sato M."/>
            <person name="Kojima T."/>
            <person name="Michiue T."/>
            <person name="Saigo K."/>
        </authorList>
    </citation>
    <scope>FUNCTION</scope>
    <scope>TISSUE SPECIFICITY</scope>
</reference>
<reference evidence="9" key="7">
    <citation type="journal article" date="2000" name="Development">
        <title>Formation and specification of distal leg segments in Drosophila by dual Bar homeobox genes, BarH1 and BarH2.</title>
        <authorList>
            <person name="Kojima T."/>
            <person name="Sato M."/>
            <person name="Saigo K."/>
        </authorList>
    </citation>
    <scope>FUNCTION</scope>
    <scope>TISSUE SPECIFICITY</scope>
</reference>
<reference key="8">
    <citation type="journal article" date="2008" name="J. Proteome Res.">
        <title>Phosphoproteome analysis of Drosophila melanogaster embryos.</title>
        <authorList>
            <person name="Zhai B."/>
            <person name="Villen J."/>
            <person name="Beausoleil S.A."/>
            <person name="Mintseris J."/>
            <person name="Gygi S.P."/>
        </authorList>
    </citation>
    <scope>PHOSPHORYLATION [LARGE SCALE ANALYSIS] AT THR-593; SER-595 AND SER-602</scope>
    <scope>IDENTIFICATION BY MASS SPECTROMETRY</scope>
    <source>
        <tissue>Embryo</tissue>
    </source>
</reference>
<protein>
    <recommendedName>
        <fullName>Homeobox protein B-H2</fullName>
    </recommendedName>
    <alternativeName>
        <fullName>Homeobox protein BarH2</fullName>
    </alternativeName>
</protein>
<sequence length="645" mass="69951">MTTMPPEMSATTAAPVGSAPSATAHHPAAVGGGMPRPASPAVGSNTTTATATTATRSRFMITDILAGAAAASAAAAAAAAALAAASSGGGRGSPTDSEREQSLVAQHHHHHQQQQQHHHHQQQQQQQQHQQAALQQYIVQQQQLLRFEREREREREREHYRERHSPPGNNPYAHHPMPPHLLAHFPPAHYAVLQQQQQQQQQQQHPHPHHLQLERERLEALHRHGHGLTGDPAQHLSHLSHLSHQQHHPHLHHPMHDERSRSPLMLQQLGGNGGNNNNNNNNSSSASNNNNNNNNSASANSNIISGNSSSSNNNNGSGNGNMLLGGPGSSISGDQASTIDDSDSDDCGGKDDDGDDSMKNGSSANGDSSSHLSLSLSKKQRKARTAFTDHQLQTLEKSFERQKYLSVQDRMELANKLELSDCQVKTWYQNRRTKWKRQTAVGLELLAEAGNYAAFQRLYGGATPYLSAWPYAAAAAAQSPHGATPSAIDIYYRQAAAAAAMQKPSLPASYRMYQSSIPPGMSLPGMPAPPPPGAAPMLSGYYAAAAAAAASAGAQQQQQQPPAASRSPATSQSANSEADCERTSSSSRQRLITPSPPLNPGSPPHRERINEEEDRERDEERDIERERERERERDEDDEEELALEV</sequence>
<name>BARH2_DROME</name>
<evidence type="ECO:0000255" key="1">
    <source>
        <dbReference type="PROSITE-ProRule" id="PRU00108"/>
    </source>
</evidence>
<evidence type="ECO:0000256" key="2">
    <source>
        <dbReference type="SAM" id="MobiDB-lite"/>
    </source>
</evidence>
<evidence type="ECO:0000269" key="3">
    <source>
    </source>
</evidence>
<evidence type="ECO:0000269" key="4">
    <source>
    </source>
</evidence>
<evidence type="ECO:0000269" key="5">
    <source>
    </source>
</evidence>
<evidence type="ECO:0000269" key="6">
    <source>
    </source>
</evidence>
<evidence type="ECO:0000269" key="7">
    <source>
    </source>
</evidence>
<evidence type="ECO:0000269" key="8">
    <source>
    </source>
</evidence>
<evidence type="ECO:0000305" key="9"/>